<proteinExistence type="inferred from homology"/>
<keyword id="KW-0030">Aminoacyl-tRNA synthetase</keyword>
<keyword id="KW-0067">ATP-binding</keyword>
<keyword id="KW-0963">Cytoplasm</keyword>
<keyword id="KW-0436">Ligase</keyword>
<keyword id="KW-0460">Magnesium</keyword>
<keyword id="KW-0479">Metal-binding</keyword>
<keyword id="KW-0547">Nucleotide-binding</keyword>
<keyword id="KW-0648">Protein biosynthesis</keyword>
<name>SYFA_FRAP2</name>
<comment type="catalytic activity">
    <reaction evidence="1">
        <text>tRNA(Phe) + L-phenylalanine + ATP = L-phenylalanyl-tRNA(Phe) + AMP + diphosphate + H(+)</text>
        <dbReference type="Rhea" id="RHEA:19413"/>
        <dbReference type="Rhea" id="RHEA-COMP:9668"/>
        <dbReference type="Rhea" id="RHEA-COMP:9699"/>
        <dbReference type="ChEBI" id="CHEBI:15378"/>
        <dbReference type="ChEBI" id="CHEBI:30616"/>
        <dbReference type="ChEBI" id="CHEBI:33019"/>
        <dbReference type="ChEBI" id="CHEBI:58095"/>
        <dbReference type="ChEBI" id="CHEBI:78442"/>
        <dbReference type="ChEBI" id="CHEBI:78531"/>
        <dbReference type="ChEBI" id="CHEBI:456215"/>
        <dbReference type="EC" id="6.1.1.20"/>
    </reaction>
</comment>
<comment type="cofactor">
    <cofactor evidence="1">
        <name>Mg(2+)</name>
        <dbReference type="ChEBI" id="CHEBI:18420"/>
    </cofactor>
    <text evidence="1">Binds 2 magnesium ions per tetramer.</text>
</comment>
<comment type="subunit">
    <text evidence="1">Tetramer of two alpha and two beta subunits.</text>
</comment>
<comment type="subcellular location">
    <subcellularLocation>
        <location evidence="1">Cytoplasm</location>
    </subcellularLocation>
</comment>
<comment type="similarity">
    <text evidence="1">Belongs to the class-II aminoacyl-tRNA synthetase family. Phe-tRNA synthetase alpha subunit type 1 subfamily.</text>
</comment>
<organism>
    <name type="scientific">Francisella philomiragia subsp. philomiragia (strain ATCC 25017 / CCUG 19701 / FSC 153 / O#319-036)</name>
    <dbReference type="NCBI Taxonomy" id="484022"/>
    <lineage>
        <taxon>Bacteria</taxon>
        <taxon>Pseudomonadati</taxon>
        <taxon>Pseudomonadota</taxon>
        <taxon>Gammaproteobacteria</taxon>
        <taxon>Thiotrichales</taxon>
        <taxon>Francisellaceae</taxon>
        <taxon>Francisella</taxon>
    </lineage>
</organism>
<dbReference type="EC" id="6.1.1.20" evidence="1"/>
<dbReference type="EMBL" id="CP000937">
    <property type="protein sequence ID" value="ABZ87954.1"/>
    <property type="molecule type" value="Genomic_DNA"/>
</dbReference>
<dbReference type="SMR" id="B0U0C4"/>
<dbReference type="KEGG" id="fph:Fphi_1729"/>
<dbReference type="eggNOG" id="COG0016">
    <property type="taxonomic scope" value="Bacteria"/>
</dbReference>
<dbReference type="HOGENOM" id="CLU_025086_0_1_6"/>
<dbReference type="GO" id="GO:0005737">
    <property type="term" value="C:cytoplasm"/>
    <property type="evidence" value="ECO:0007669"/>
    <property type="project" value="UniProtKB-SubCell"/>
</dbReference>
<dbReference type="GO" id="GO:0005524">
    <property type="term" value="F:ATP binding"/>
    <property type="evidence" value="ECO:0007669"/>
    <property type="project" value="UniProtKB-UniRule"/>
</dbReference>
<dbReference type="GO" id="GO:0000287">
    <property type="term" value="F:magnesium ion binding"/>
    <property type="evidence" value="ECO:0007669"/>
    <property type="project" value="UniProtKB-UniRule"/>
</dbReference>
<dbReference type="GO" id="GO:0004826">
    <property type="term" value="F:phenylalanine-tRNA ligase activity"/>
    <property type="evidence" value="ECO:0007669"/>
    <property type="project" value="UniProtKB-UniRule"/>
</dbReference>
<dbReference type="GO" id="GO:0000049">
    <property type="term" value="F:tRNA binding"/>
    <property type="evidence" value="ECO:0007669"/>
    <property type="project" value="InterPro"/>
</dbReference>
<dbReference type="GO" id="GO:0006432">
    <property type="term" value="P:phenylalanyl-tRNA aminoacylation"/>
    <property type="evidence" value="ECO:0007669"/>
    <property type="project" value="UniProtKB-UniRule"/>
</dbReference>
<dbReference type="CDD" id="cd00496">
    <property type="entry name" value="PheRS_alpha_core"/>
    <property type="match status" value="1"/>
</dbReference>
<dbReference type="FunFam" id="3.30.930.10:FF:000003">
    <property type="entry name" value="Phenylalanine--tRNA ligase alpha subunit"/>
    <property type="match status" value="1"/>
</dbReference>
<dbReference type="Gene3D" id="3.30.930.10">
    <property type="entry name" value="Bira Bifunctional Protein, Domain 2"/>
    <property type="match status" value="1"/>
</dbReference>
<dbReference type="HAMAP" id="MF_00281">
    <property type="entry name" value="Phe_tRNA_synth_alpha1"/>
    <property type="match status" value="1"/>
</dbReference>
<dbReference type="InterPro" id="IPR006195">
    <property type="entry name" value="aa-tRNA-synth_II"/>
</dbReference>
<dbReference type="InterPro" id="IPR045864">
    <property type="entry name" value="aa-tRNA-synth_II/BPL/LPL"/>
</dbReference>
<dbReference type="InterPro" id="IPR004529">
    <property type="entry name" value="Phe-tRNA-synth_IIc_asu"/>
</dbReference>
<dbReference type="InterPro" id="IPR004188">
    <property type="entry name" value="Phe-tRNA_ligase_II_N"/>
</dbReference>
<dbReference type="InterPro" id="IPR022911">
    <property type="entry name" value="Phe_tRNA_ligase_alpha1_bac"/>
</dbReference>
<dbReference type="InterPro" id="IPR002319">
    <property type="entry name" value="Phenylalanyl-tRNA_Synthase"/>
</dbReference>
<dbReference type="InterPro" id="IPR010978">
    <property type="entry name" value="tRNA-bd_arm"/>
</dbReference>
<dbReference type="NCBIfam" id="TIGR00468">
    <property type="entry name" value="pheS"/>
    <property type="match status" value="1"/>
</dbReference>
<dbReference type="PANTHER" id="PTHR11538:SF41">
    <property type="entry name" value="PHENYLALANINE--TRNA LIGASE, MITOCHONDRIAL"/>
    <property type="match status" value="1"/>
</dbReference>
<dbReference type="PANTHER" id="PTHR11538">
    <property type="entry name" value="PHENYLALANYL-TRNA SYNTHETASE"/>
    <property type="match status" value="1"/>
</dbReference>
<dbReference type="Pfam" id="PF02912">
    <property type="entry name" value="Phe_tRNA-synt_N"/>
    <property type="match status" value="1"/>
</dbReference>
<dbReference type="Pfam" id="PF01409">
    <property type="entry name" value="tRNA-synt_2d"/>
    <property type="match status" value="1"/>
</dbReference>
<dbReference type="SUPFAM" id="SSF55681">
    <property type="entry name" value="Class II aaRS and biotin synthetases"/>
    <property type="match status" value="1"/>
</dbReference>
<dbReference type="SUPFAM" id="SSF46589">
    <property type="entry name" value="tRNA-binding arm"/>
    <property type="match status" value="1"/>
</dbReference>
<dbReference type="PROSITE" id="PS50862">
    <property type="entry name" value="AA_TRNA_LIGASE_II"/>
    <property type="match status" value="1"/>
</dbReference>
<sequence>MQIVDQMRDQAFEELNLVNDKKSLDDIRVKYLGKKGELTGMMRLIATLPNEEKPKLGQAVNIAKEALQNAINEKLAKFEEAELNEKLASEKIDVTLKGVGQNQGSLHPVTKTLNRIEAFFKQNGFAVEVGPEIESDYYNFETLNIPSHHPARAMHDTFYIDDTHVLRTHTSGVQIRTMEKQQPPIRIIAPGRVYRCDSDITHTPMFHQVEGLLVDKDVSFADLKGLLHAFLNSFFEKDLKVRFRPSYFPFTEPSAEADMECVMCDGKGCRVCKHTGWLEVLGCGMVHPKVLKAGNIDSENYQGFAFGMGVERLSMLRYGIDDLRMFFENDLRFLKQF</sequence>
<gene>
    <name evidence="1" type="primary">pheS</name>
    <name type="ordered locus">Fphi_1729</name>
</gene>
<protein>
    <recommendedName>
        <fullName evidence="1">Phenylalanine--tRNA ligase alpha subunit</fullName>
        <ecNumber evidence="1">6.1.1.20</ecNumber>
    </recommendedName>
    <alternativeName>
        <fullName evidence="1">Phenylalanyl-tRNA synthetase alpha subunit</fullName>
        <shortName evidence="1">PheRS</shortName>
    </alternativeName>
</protein>
<evidence type="ECO:0000255" key="1">
    <source>
        <dbReference type="HAMAP-Rule" id="MF_00281"/>
    </source>
</evidence>
<reference key="1">
    <citation type="submission" date="2007-12" db="EMBL/GenBank/DDBJ databases">
        <title>Complete sequence of chromosome of Francisella philomiragia subsp. philomiragia ATCC 25017.</title>
        <authorList>
            <consortium name="US DOE Joint Genome Institute"/>
            <person name="Copeland A."/>
            <person name="Lucas S."/>
            <person name="Lapidus A."/>
            <person name="Barry K."/>
            <person name="Detter J.C."/>
            <person name="Glavina del Rio T."/>
            <person name="Hammon N."/>
            <person name="Israni S."/>
            <person name="Dalin E."/>
            <person name="Tice H."/>
            <person name="Pitluck S."/>
            <person name="Chain P."/>
            <person name="Malfatti S."/>
            <person name="Shin M."/>
            <person name="Vergez L."/>
            <person name="Schmutz J."/>
            <person name="Larimer F."/>
            <person name="Land M."/>
            <person name="Hauser L."/>
            <person name="Richardson P."/>
        </authorList>
    </citation>
    <scope>NUCLEOTIDE SEQUENCE [LARGE SCALE GENOMIC DNA]</scope>
    <source>
        <strain>ATCC 25017 / CCUG 19701 / FSC 153 / O#319-036</strain>
    </source>
</reference>
<feature type="chain" id="PRO_1000078839" description="Phenylalanine--tRNA ligase alpha subunit">
    <location>
        <begin position="1"/>
        <end position="337"/>
    </location>
</feature>
<feature type="binding site" evidence="1">
    <location>
        <position position="252"/>
    </location>
    <ligand>
        <name>Mg(2+)</name>
        <dbReference type="ChEBI" id="CHEBI:18420"/>
        <note>shared with beta subunit</note>
    </ligand>
</feature>
<accession>B0U0C4</accession>